<accession>A1K4K7</accession>
<gene>
    <name evidence="1" type="primary">aceK</name>
    <name type="ordered locus">azo1145</name>
</gene>
<evidence type="ECO:0000255" key="1">
    <source>
        <dbReference type="HAMAP-Rule" id="MF_00747"/>
    </source>
</evidence>
<reference key="1">
    <citation type="journal article" date="2006" name="Nat. Biotechnol.">
        <title>Complete genome of the mutualistic, N2-fixing grass endophyte Azoarcus sp. strain BH72.</title>
        <authorList>
            <person name="Krause A."/>
            <person name="Ramakumar A."/>
            <person name="Bartels D."/>
            <person name="Battistoni F."/>
            <person name="Bekel T."/>
            <person name="Boch J."/>
            <person name="Boehm M."/>
            <person name="Friedrich F."/>
            <person name="Hurek T."/>
            <person name="Krause L."/>
            <person name="Linke B."/>
            <person name="McHardy A.C."/>
            <person name="Sarkar A."/>
            <person name="Schneiker S."/>
            <person name="Syed A.A."/>
            <person name="Thauer R."/>
            <person name="Vorhoelter F.-J."/>
            <person name="Weidner S."/>
            <person name="Puehler A."/>
            <person name="Reinhold-Hurek B."/>
            <person name="Kaiser O."/>
            <person name="Goesmann A."/>
        </authorList>
    </citation>
    <scope>NUCLEOTIDE SEQUENCE [LARGE SCALE GENOMIC DNA]</scope>
    <source>
        <strain>BH72</strain>
    </source>
</reference>
<sequence>MDAQVGDNPVAQAIAHALVEGFNKHYRIFRGTSRRAKEYFEAGDWRAQLDAVRDRVQFYDDRVDETVRRLLEEFDADSLDDATWQQVKLHFIGALINHKQPELAETFFNSVGCKILHRTYFNNDYIFARPAISTEYIESYPPVYSSYYPQDGGLRATIRRIIEDFDWQRPFEDLDRDIDCIMRAALAHLGEWPAMEVNCQLQVLYSAFYRNKTAYIIGKVINGWQDYPFTLAVRHGASGRLVIDTILLDPWRISVLFSLSRAYFMVDMEVPSGYVQFLRSIMPNKPRSELYTMLGLGKQGKTMFFRDLVAHLRHSNDQFIIAPGIRGLVMLVFTLPSYPYVFKIIKDVFGSSKNMDRATVKRKYLMVKQVDRVGRMADTLEFSYAALPLSRFHPELLEELRTLAPSAFEIDGDALVLKHFYIERRMTPLNIHLEKASDGEVEAAVHEYGNAIRELAIANIFPGDMLWKNFGVTRYGRVVFYDYDEIEYMTSMNFRRIPPAPHEDMELSGEPWYSAGPMDVFPEEFATFLLGSPRVRKAFMKYHRDLLEPAFWQAAQQGVRDGHVEDFFPYPAELRFSVMFPATPVAAQD</sequence>
<comment type="function">
    <text evidence="1">Bifunctional enzyme which can phosphorylate or dephosphorylate isocitrate dehydrogenase (IDH) on a specific serine residue. This is a regulatory mechanism which enables bacteria to bypass the Krebs cycle via the glyoxylate shunt in response to the source of carbon. When bacteria are grown on glucose, IDH is fully active and unphosphorylated, but when grown on acetate or ethanol, the activity of IDH declines drastically concomitant with its phosphorylation.</text>
</comment>
<comment type="catalytic activity">
    <reaction evidence="1">
        <text>L-seryl-[isocitrate dehydrogenase] + ATP = O-phospho-L-seryl-[isocitrate dehydrogenase] + ADP + H(+)</text>
        <dbReference type="Rhea" id="RHEA:43540"/>
        <dbReference type="Rhea" id="RHEA-COMP:10605"/>
        <dbReference type="Rhea" id="RHEA-COMP:10606"/>
        <dbReference type="ChEBI" id="CHEBI:15378"/>
        <dbReference type="ChEBI" id="CHEBI:29999"/>
        <dbReference type="ChEBI" id="CHEBI:30616"/>
        <dbReference type="ChEBI" id="CHEBI:83421"/>
        <dbReference type="ChEBI" id="CHEBI:456216"/>
        <dbReference type="EC" id="2.7.11.5"/>
    </reaction>
</comment>
<comment type="subcellular location">
    <subcellularLocation>
        <location evidence="1">Cytoplasm</location>
    </subcellularLocation>
</comment>
<comment type="similarity">
    <text evidence="1">Belongs to the AceK family.</text>
</comment>
<name>ACEK_AZOSB</name>
<organism>
    <name type="scientific">Azoarcus sp. (strain BH72)</name>
    <dbReference type="NCBI Taxonomy" id="418699"/>
    <lineage>
        <taxon>Bacteria</taxon>
        <taxon>Pseudomonadati</taxon>
        <taxon>Pseudomonadota</taxon>
        <taxon>Betaproteobacteria</taxon>
        <taxon>Rhodocyclales</taxon>
        <taxon>Zoogloeaceae</taxon>
        <taxon>Azoarcus</taxon>
    </lineage>
</organism>
<feature type="chain" id="PRO_0000288281" description="Isocitrate dehydrogenase kinase/phosphatase">
    <location>
        <begin position="1"/>
        <end position="589"/>
    </location>
</feature>
<feature type="active site" evidence="1">
    <location>
        <position position="378"/>
    </location>
</feature>
<feature type="binding site" evidence="1">
    <location>
        <begin position="322"/>
        <end position="328"/>
    </location>
    <ligand>
        <name>ATP</name>
        <dbReference type="ChEBI" id="CHEBI:30616"/>
    </ligand>
</feature>
<feature type="binding site" evidence="1">
    <location>
        <position position="343"/>
    </location>
    <ligand>
        <name>ATP</name>
        <dbReference type="ChEBI" id="CHEBI:30616"/>
    </ligand>
</feature>
<protein>
    <recommendedName>
        <fullName evidence="1">Isocitrate dehydrogenase kinase/phosphatase</fullName>
        <shortName evidence="1">IDH kinase/phosphatase</shortName>
        <shortName evidence="1">IDHK/P</shortName>
        <ecNumber evidence="1">2.7.11.5</ecNumber>
        <ecNumber evidence="1">3.1.3.-</ecNumber>
    </recommendedName>
</protein>
<proteinExistence type="inferred from homology"/>
<dbReference type="EC" id="2.7.11.5" evidence="1"/>
<dbReference type="EC" id="3.1.3.-" evidence="1"/>
<dbReference type="EMBL" id="AM406670">
    <property type="protein sequence ID" value="CAL93762.1"/>
    <property type="molecule type" value="Genomic_DNA"/>
</dbReference>
<dbReference type="RefSeq" id="WP_011764878.1">
    <property type="nucleotide sequence ID" value="NC_008702.1"/>
</dbReference>
<dbReference type="SMR" id="A1K4K7"/>
<dbReference type="STRING" id="62928.azo1145"/>
<dbReference type="KEGG" id="azo:azo1145"/>
<dbReference type="eggNOG" id="COG4579">
    <property type="taxonomic scope" value="Bacteria"/>
</dbReference>
<dbReference type="HOGENOM" id="CLU_033804_1_1_4"/>
<dbReference type="Proteomes" id="UP000002588">
    <property type="component" value="Chromosome"/>
</dbReference>
<dbReference type="GO" id="GO:0005737">
    <property type="term" value="C:cytoplasm"/>
    <property type="evidence" value="ECO:0007669"/>
    <property type="project" value="UniProtKB-SubCell"/>
</dbReference>
<dbReference type="GO" id="GO:0008772">
    <property type="term" value="F:[isocitrate dehydrogenase (NADP+)] kinase activity"/>
    <property type="evidence" value="ECO:0007669"/>
    <property type="project" value="UniProtKB-UniRule"/>
</dbReference>
<dbReference type="GO" id="GO:0016208">
    <property type="term" value="F:AMP binding"/>
    <property type="evidence" value="ECO:0007669"/>
    <property type="project" value="TreeGrafter"/>
</dbReference>
<dbReference type="GO" id="GO:0005524">
    <property type="term" value="F:ATP binding"/>
    <property type="evidence" value="ECO:0007669"/>
    <property type="project" value="UniProtKB-UniRule"/>
</dbReference>
<dbReference type="GO" id="GO:0004721">
    <property type="term" value="F:phosphoprotein phosphatase activity"/>
    <property type="evidence" value="ECO:0007669"/>
    <property type="project" value="UniProtKB-KW"/>
</dbReference>
<dbReference type="GO" id="GO:0004674">
    <property type="term" value="F:protein serine/threonine kinase activity"/>
    <property type="evidence" value="ECO:0007669"/>
    <property type="project" value="UniProtKB-KW"/>
</dbReference>
<dbReference type="GO" id="GO:0006006">
    <property type="term" value="P:glucose metabolic process"/>
    <property type="evidence" value="ECO:0007669"/>
    <property type="project" value="InterPro"/>
</dbReference>
<dbReference type="GO" id="GO:0006097">
    <property type="term" value="P:glyoxylate cycle"/>
    <property type="evidence" value="ECO:0007669"/>
    <property type="project" value="UniProtKB-UniRule"/>
</dbReference>
<dbReference type="GO" id="GO:0006099">
    <property type="term" value="P:tricarboxylic acid cycle"/>
    <property type="evidence" value="ECO:0007669"/>
    <property type="project" value="UniProtKB-UniRule"/>
</dbReference>
<dbReference type="HAMAP" id="MF_00747">
    <property type="entry name" value="AceK"/>
    <property type="match status" value="1"/>
</dbReference>
<dbReference type="InterPro" id="IPR046855">
    <property type="entry name" value="AceK_kinase"/>
</dbReference>
<dbReference type="InterPro" id="IPR046854">
    <property type="entry name" value="AceK_regulatory"/>
</dbReference>
<dbReference type="InterPro" id="IPR010452">
    <property type="entry name" value="Isocitrate_DH_AceK"/>
</dbReference>
<dbReference type="NCBIfam" id="NF002804">
    <property type="entry name" value="PRK02946.1"/>
    <property type="match status" value="1"/>
</dbReference>
<dbReference type="PANTHER" id="PTHR39559">
    <property type="match status" value="1"/>
</dbReference>
<dbReference type="PANTHER" id="PTHR39559:SF1">
    <property type="entry name" value="ISOCITRATE DEHYDROGENASE KINASE_PHOSPHATASE"/>
    <property type="match status" value="1"/>
</dbReference>
<dbReference type="Pfam" id="PF06315">
    <property type="entry name" value="AceK_kinase"/>
    <property type="match status" value="1"/>
</dbReference>
<dbReference type="Pfam" id="PF20423">
    <property type="entry name" value="AceK_regulatory"/>
    <property type="match status" value="1"/>
</dbReference>
<dbReference type="PIRSF" id="PIRSF000719">
    <property type="entry name" value="AceK"/>
    <property type="match status" value="1"/>
</dbReference>
<keyword id="KW-0067">ATP-binding</keyword>
<keyword id="KW-0963">Cytoplasm</keyword>
<keyword id="KW-0329">Glyoxylate bypass</keyword>
<keyword id="KW-0378">Hydrolase</keyword>
<keyword id="KW-0418">Kinase</keyword>
<keyword id="KW-0547">Nucleotide-binding</keyword>
<keyword id="KW-0904">Protein phosphatase</keyword>
<keyword id="KW-1185">Reference proteome</keyword>
<keyword id="KW-0723">Serine/threonine-protein kinase</keyword>
<keyword id="KW-0808">Transferase</keyword>
<keyword id="KW-0816">Tricarboxylic acid cycle</keyword>